<organism>
    <name type="scientific">Nicotiana tabacum</name>
    <name type="common">Common tobacco</name>
    <dbReference type="NCBI Taxonomy" id="4097"/>
    <lineage>
        <taxon>Eukaryota</taxon>
        <taxon>Viridiplantae</taxon>
        <taxon>Streptophyta</taxon>
        <taxon>Embryophyta</taxon>
        <taxon>Tracheophyta</taxon>
        <taxon>Spermatophyta</taxon>
        <taxon>Magnoliopsida</taxon>
        <taxon>eudicotyledons</taxon>
        <taxon>Gunneridae</taxon>
        <taxon>Pentapetalae</taxon>
        <taxon>asterids</taxon>
        <taxon>lamiids</taxon>
        <taxon>Solanales</taxon>
        <taxon>Solanaceae</taxon>
        <taxon>Nicotianoideae</taxon>
        <taxon>Nicotianeae</taxon>
        <taxon>Nicotiana</taxon>
    </lineage>
</organism>
<dbReference type="EMBL" id="D38126">
    <property type="protein sequence ID" value="BAA07324.1"/>
    <property type="molecule type" value="mRNA"/>
</dbReference>
<dbReference type="PIR" id="T02590">
    <property type="entry name" value="T02590"/>
</dbReference>
<dbReference type="RefSeq" id="NP_001311965.1">
    <property type="nucleotide sequence ID" value="NM_001325036.1"/>
</dbReference>
<dbReference type="SMR" id="Q40479"/>
<dbReference type="STRING" id="4097.Q40479"/>
<dbReference type="PaxDb" id="4097-Q40479"/>
<dbReference type="GeneID" id="107769743"/>
<dbReference type="KEGG" id="nta:107769743"/>
<dbReference type="OMA" id="HQANVCL"/>
<dbReference type="OrthoDB" id="1647183at2759"/>
<dbReference type="Proteomes" id="UP000084051">
    <property type="component" value="Unplaced"/>
</dbReference>
<dbReference type="GO" id="GO:0005634">
    <property type="term" value="C:nucleus"/>
    <property type="evidence" value="ECO:0007669"/>
    <property type="project" value="UniProtKB-SubCell"/>
</dbReference>
<dbReference type="GO" id="GO:0003677">
    <property type="term" value="F:DNA binding"/>
    <property type="evidence" value="ECO:0007669"/>
    <property type="project" value="UniProtKB-KW"/>
</dbReference>
<dbReference type="GO" id="GO:0003700">
    <property type="term" value="F:DNA-binding transcription factor activity"/>
    <property type="evidence" value="ECO:0007669"/>
    <property type="project" value="InterPro"/>
</dbReference>
<dbReference type="GO" id="GO:0006952">
    <property type="term" value="P:defense response"/>
    <property type="evidence" value="ECO:0007669"/>
    <property type="project" value="UniProtKB-KW"/>
</dbReference>
<dbReference type="GO" id="GO:0009873">
    <property type="term" value="P:ethylene-activated signaling pathway"/>
    <property type="evidence" value="ECO:0007669"/>
    <property type="project" value="UniProtKB-KW"/>
</dbReference>
<dbReference type="CDD" id="cd00018">
    <property type="entry name" value="AP2"/>
    <property type="match status" value="1"/>
</dbReference>
<dbReference type="FunFam" id="3.30.730.10:FF:000001">
    <property type="entry name" value="Ethylene-responsive transcription factor 2"/>
    <property type="match status" value="1"/>
</dbReference>
<dbReference type="Gene3D" id="3.30.730.10">
    <property type="entry name" value="AP2/ERF domain"/>
    <property type="match status" value="1"/>
</dbReference>
<dbReference type="InterPro" id="IPR001471">
    <property type="entry name" value="AP2/ERF_dom"/>
</dbReference>
<dbReference type="InterPro" id="IPR036955">
    <property type="entry name" value="AP2/ERF_dom_sf"/>
</dbReference>
<dbReference type="InterPro" id="IPR016177">
    <property type="entry name" value="DNA-bd_dom_sf"/>
</dbReference>
<dbReference type="InterPro" id="IPR044808">
    <property type="entry name" value="ERF_plant"/>
</dbReference>
<dbReference type="PANTHER" id="PTHR31190">
    <property type="entry name" value="DNA-BINDING DOMAIN"/>
    <property type="match status" value="1"/>
</dbReference>
<dbReference type="PANTHER" id="PTHR31190:SF476">
    <property type="entry name" value="ETHYLENE-RESPONSIVE TRANSCRIPTION FACTOR 1"/>
    <property type="match status" value="1"/>
</dbReference>
<dbReference type="Pfam" id="PF00847">
    <property type="entry name" value="AP2"/>
    <property type="match status" value="1"/>
</dbReference>
<dbReference type="PRINTS" id="PR00367">
    <property type="entry name" value="ETHRSPELEMNT"/>
</dbReference>
<dbReference type="SMART" id="SM00380">
    <property type="entry name" value="AP2"/>
    <property type="match status" value="1"/>
</dbReference>
<dbReference type="SUPFAM" id="SSF54171">
    <property type="entry name" value="DNA-binding domain"/>
    <property type="match status" value="1"/>
</dbReference>
<dbReference type="PROSITE" id="PS51032">
    <property type="entry name" value="AP2_ERF"/>
    <property type="match status" value="1"/>
</dbReference>
<keyword id="KW-0010">Activator</keyword>
<keyword id="KW-0238">DNA-binding</keyword>
<keyword id="KW-0936">Ethylene signaling pathway</keyword>
<keyword id="KW-0539">Nucleus</keyword>
<keyword id="KW-0611">Plant defense</keyword>
<keyword id="KW-1185">Reference proteome</keyword>
<keyword id="KW-0804">Transcription</keyword>
<keyword id="KW-0805">Transcription regulation</keyword>
<proteinExistence type="evidence at transcript level"/>
<reference key="1">
    <citation type="journal article" date="1995" name="Plant Cell">
        <title>Ethylene-inducible DNA binding proteins that interact with an ethylene responsive element.</title>
        <authorList>
            <person name="Ohme-Takagi M."/>
            <person name="Shinshi H."/>
        </authorList>
    </citation>
    <scope>NUCLEOTIDE SEQUENCE [MRNA]</scope>
    <scope>FUNCTION</scope>
    <scope>INDUCTION</scope>
    <scope>TISSUE SPECIFICITY</scope>
    <source>
        <strain>cv. Bright Yellow 4</strain>
        <tissue>Leaf</tissue>
    </source>
</reference>
<reference key="2">
    <citation type="journal article" date="1998" name="Plant J.">
        <title>Immediate early induction of mRNAs for ethylene-responsive transcription factors in tobacco leaf strips after cutting.</title>
        <authorList>
            <person name="Suzuki K."/>
            <person name="Suzuki N."/>
            <person name="Ohme-Takagi M."/>
            <person name="Shinshi H."/>
        </authorList>
    </citation>
    <scope>FUNCTION</scope>
    <scope>INDUCTION</scope>
</reference>
<reference key="3">
    <citation type="journal article" date="1999" name="Plant J.">
        <title>Elicitor-responsive, ethylene-independent activation of GCC box-mediated transcription that is regulated by both protein phosphorylation and dephosphorylation in cultured tobacco cells.</title>
        <authorList>
            <person name="Yamamoto S."/>
            <person name="Suzuki K."/>
            <person name="Shinshi H."/>
        </authorList>
    </citation>
    <scope>FUNCTION</scope>
    <scope>INDUCTION</scope>
</reference>
<reference key="4">
    <citation type="journal article" date="2000" name="Plant J.">
        <title>Three ethylene-responsive transcription factors in tobacco with distinct transactivation functions.</title>
        <authorList>
            <person name="Ohta M."/>
            <person name="Ohme-Takagi M."/>
            <person name="Shinshi H."/>
        </authorList>
    </citation>
    <scope>FUNCTION</scope>
    <scope>SUBCELLULAR LOCATION</scope>
</reference>
<reference key="5">
    <citation type="journal article" date="2002" name="Plant Mol. Biol.">
        <title>Wounding activates immediate early transcription of genes for ERFs in tobacco plants.</title>
        <authorList>
            <person name="Nishiuchi T."/>
            <person name="Suzuki K."/>
            <person name="Kitajima S."/>
            <person name="Sato F."/>
            <person name="Shinshi H."/>
        </authorList>
    </citation>
    <scope>INDUCTION</scope>
</reference>
<accession>Q40479</accession>
<gene>
    <name type="primary">ERF2</name>
    <name type="synonym">ERF-2</name>
</gene>
<comment type="function">
    <text evidence="4 5 7 8">Acts as a transcriptional activator and may be involved in disease resistance pathways. Binds to the GCC-box pathogenesis-related promoter element. Involved in the regulation of gene expression by stress factors and by components of stress signal transduction pathways mediated by ethylene, that seems to depend on a protein kinase cascade, and to be influenced by methyl-jasmonate.</text>
</comment>
<comment type="subcellular location">
    <subcellularLocation>
        <location evidence="2 5">Nucleus</location>
    </subcellularLocation>
</comment>
<comment type="tissue specificity">
    <text evidence="7">Expressed in roots and at low levels in buds and leaves. Not expressed in cell culture.</text>
</comment>
<comment type="induction">
    <text evidence="4 6 7 8">Induced by ethephon (ethylene-releasing compound) in buds and to a lower extent in leaves. Strongly induced by cycloheximide and mechanical stimuli. Wounding leads to a both local and systemic expression, independently of ethylene, and through a de-novo-protein-synthesis-independent regulation. Wound induction is reduced by methyl-jasmonate. Induction by purified xylanase from Trichoderma viride (TvX) and another elicitor from Phytophthora infestans (PiE), that appears to be mediated by both protein kinases and protein phosphatases.</text>
</comment>
<comment type="domain">
    <text evidence="1">The AP2/ERF domain binds specifically to the 5'-GCCGCC-3' motif. The affinity of this binding is higher if the seventh amino-acid of this domain is basic (By similarity).</text>
</comment>
<comment type="similarity">
    <text evidence="9">Belongs to the ethylene-response factor family. Class 1 subfamily.</text>
</comment>
<feature type="chain" id="PRO_0000112548" description="Ethylene-responsive transcription factor 2">
    <location>
        <begin position="1"/>
        <end position="233"/>
    </location>
</feature>
<feature type="DNA-binding region" description="AP2/ERF" evidence="2">
    <location>
        <begin position="98"/>
        <end position="156"/>
    </location>
</feature>
<feature type="region of interest" description="Disordered" evidence="3">
    <location>
        <begin position="164"/>
        <end position="203"/>
    </location>
</feature>
<feature type="compositionally biased region" description="Low complexity" evidence="3">
    <location>
        <begin position="177"/>
        <end position="186"/>
    </location>
</feature>
<name>ERF2_TOBAC</name>
<protein>
    <recommendedName>
        <fullName>Ethylene-responsive transcription factor 2</fullName>
        <shortName>NtERF2</shortName>
    </recommendedName>
    <alternativeName>
        <fullName>Ethylene-responsive element-binding factor 2</fullName>
        <shortName>EREBP-2</shortName>
    </alternativeName>
</protein>
<sequence>MYQPISTELPPTSFSSLMPCLTDTWGDLPLKVDDSEDMVIYGLLSDALTAGWTPFNLTSTEIKAEPREEIEPATIPVPSVAPPAETTTAQAVVPKGRHYRGVRQRPWGKFAAEIRDPAKNGARVWLGTYETAEEAALAYDKAAYRMRGSKALLNFPHRIGLNEPEPVRLTAKRRSPEPASSSISSALENGSPKRRRKAVAAKKAELEVQSRSNAMQVGCQMEQFPVGEQLLVS</sequence>
<evidence type="ECO:0000250" key="1"/>
<evidence type="ECO:0000255" key="2">
    <source>
        <dbReference type="PROSITE-ProRule" id="PRU00366"/>
    </source>
</evidence>
<evidence type="ECO:0000256" key="3">
    <source>
        <dbReference type="SAM" id="MobiDB-lite"/>
    </source>
</evidence>
<evidence type="ECO:0000269" key="4">
    <source>
    </source>
</evidence>
<evidence type="ECO:0000269" key="5">
    <source>
    </source>
</evidence>
<evidence type="ECO:0000269" key="6">
    <source>
    </source>
</evidence>
<evidence type="ECO:0000269" key="7">
    <source>
    </source>
</evidence>
<evidence type="ECO:0000269" key="8">
    <source ref="2"/>
</evidence>
<evidence type="ECO:0000305" key="9"/>